<name>TATB_CUPNH</name>
<feature type="chain" id="PRO_0000301216" description="Sec-independent protein translocase protein TatB">
    <location>
        <begin position="1"/>
        <end position="170"/>
    </location>
</feature>
<feature type="transmembrane region" description="Helical" evidence="1">
    <location>
        <begin position="1"/>
        <end position="21"/>
    </location>
</feature>
<evidence type="ECO:0000255" key="1">
    <source>
        <dbReference type="HAMAP-Rule" id="MF_00237"/>
    </source>
</evidence>
<reference key="1">
    <citation type="journal article" date="2006" name="Nat. Biotechnol.">
        <title>Genome sequence of the bioplastic-producing 'Knallgas' bacterium Ralstonia eutropha H16.</title>
        <authorList>
            <person name="Pohlmann A."/>
            <person name="Fricke W.F."/>
            <person name="Reinecke F."/>
            <person name="Kusian B."/>
            <person name="Liesegang H."/>
            <person name="Cramm R."/>
            <person name="Eitinger T."/>
            <person name="Ewering C."/>
            <person name="Poetter M."/>
            <person name="Schwartz E."/>
            <person name="Strittmatter A."/>
            <person name="Voss I."/>
            <person name="Gottschalk G."/>
            <person name="Steinbuechel A."/>
            <person name="Friedrich B."/>
            <person name="Bowien B."/>
        </authorList>
    </citation>
    <scope>NUCLEOTIDE SEQUENCE [LARGE SCALE GENOMIC DNA]</scope>
    <source>
        <strain>ATCC 17699 / DSM 428 / KCTC 22496 / NCIMB 10442 / H16 / Stanier 337</strain>
    </source>
</reference>
<sequence length="170" mass="18783">MIDLGISKLALIGAVALIVIGPERLPKVARTVGALVGRAQRYINDVKAEVSREVELEELRKMRTEFEDAARDVERTIHKEVNEQTQALNEALGGAEGTSGGGSADAGGGFVPSWDAAHKAHNGRKSWRVKQGARPLWFKRQHNVRVWVQSGAARVKRHRPVTRPSRSFFE</sequence>
<comment type="function">
    <text evidence="1">Part of the twin-arginine translocation (Tat) system that transports large folded proteins containing a characteristic twin-arginine motif in their signal peptide across membranes. Together with TatC, TatB is part of a receptor directly interacting with Tat signal peptides. TatB may form an oligomeric binding site that transiently accommodates folded Tat precursor proteins before their translocation.</text>
</comment>
<comment type="subunit">
    <text evidence="1">The Tat system comprises two distinct complexes: a TatABC complex, containing multiple copies of TatA, TatB and TatC subunits, and a separate TatA complex, containing only TatA subunits. Substrates initially bind to the TatABC complex, which probably triggers association of the separate TatA complex to form the active translocon.</text>
</comment>
<comment type="subcellular location">
    <subcellularLocation>
        <location evidence="1">Cell inner membrane</location>
        <topology evidence="1">Single-pass membrane protein</topology>
    </subcellularLocation>
</comment>
<comment type="similarity">
    <text evidence="1">Belongs to the TatB family.</text>
</comment>
<proteinExistence type="inferred from homology"/>
<accession>Q0K699</accession>
<protein>
    <recommendedName>
        <fullName evidence="1">Sec-independent protein translocase protein TatB</fullName>
    </recommendedName>
</protein>
<dbReference type="EMBL" id="AM260479">
    <property type="protein sequence ID" value="CAJ94472.1"/>
    <property type="molecule type" value="Genomic_DNA"/>
</dbReference>
<dbReference type="RefSeq" id="WP_010812320.1">
    <property type="nucleotide sequence ID" value="NZ_CP039287.1"/>
</dbReference>
<dbReference type="SMR" id="Q0K699"/>
<dbReference type="STRING" id="381666.H16_A3404"/>
<dbReference type="KEGG" id="reh:H16_A3404"/>
<dbReference type="eggNOG" id="COG1826">
    <property type="taxonomic scope" value="Bacteria"/>
</dbReference>
<dbReference type="HOGENOM" id="CLU_086034_1_1_4"/>
<dbReference type="OrthoDB" id="9816005at2"/>
<dbReference type="Proteomes" id="UP000008210">
    <property type="component" value="Chromosome 1"/>
</dbReference>
<dbReference type="GO" id="GO:0033281">
    <property type="term" value="C:TAT protein transport complex"/>
    <property type="evidence" value="ECO:0007669"/>
    <property type="project" value="UniProtKB-UniRule"/>
</dbReference>
<dbReference type="GO" id="GO:0008320">
    <property type="term" value="F:protein transmembrane transporter activity"/>
    <property type="evidence" value="ECO:0007669"/>
    <property type="project" value="UniProtKB-UniRule"/>
</dbReference>
<dbReference type="GO" id="GO:0043953">
    <property type="term" value="P:protein transport by the Tat complex"/>
    <property type="evidence" value="ECO:0007669"/>
    <property type="project" value="UniProtKB-UniRule"/>
</dbReference>
<dbReference type="Gene3D" id="1.20.5.3310">
    <property type="match status" value="1"/>
</dbReference>
<dbReference type="HAMAP" id="MF_00237">
    <property type="entry name" value="TatB"/>
    <property type="match status" value="1"/>
</dbReference>
<dbReference type="InterPro" id="IPR003369">
    <property type="entry name" value="TatA/B/E"/>
</dbReference>
<dbReference type="InterPro" id="IPR018448">
    <property type="entry name" value="TatB"/>
</dbReference>
<dbReference type="NCBIfam" id="TIGR01410">
    <property type="entry name" value="tatB"/>
    <property type="match status" value="1"/>
</dbReference>
<dbReference type="PANTHER" id="PTHR33162">
    <property type="entry name" value="SEC-INDEPENDENT PROTEIN TRANSLOCASE PROTEIN TATA, CHLOROPLASTIC"/>
    <property type="match status" value="1"/>
</dbReference>
<dbReference type="PANTHER" id="PTHR33162:SF1">
    <property type="entry name" value="SEC-INDEPENDENT PROTEIN TRANSLOCASE PROTEIN TATA, CHLOROPLASTIC"/>
    <property type="match status" value="1"/>
</dbReference>
<dbReference type="Pfam" id="PF02416">
    <property type="entry name" value="TatA_B_E"/>
    <property type="match status" value="1"/>
</dbReference>
<dbReference type="PRINTS" id="PR01506">
    <property type="entry name" value="TATBPROTEIN"/>
</dbReference>
<organism>
    <name type="scientific">Cupriavidus necator (strain ATCC 17699 / DSM 428 / KCTC 22496 / NCIMB 10442 / H16 / Stanier 337)</name>
    <name type="common">Ralstonia eutropha</name>
    <dbReference type="NCBI Taxonomy" id="381666"/>
    <lineage>
        <taxon>Bacteria</taxon>
        <taxon>Pseudomonadati</taxon>
        <taxon>Pseudomonadota</taxon>
        <taxon>Betaproteobacteria</taxon>
        <taxon>Burkholderiales</taxon>
        <taxon>Burkholderiaceae</taxon>
        <taxon>Cupriavidus</taxon>
    </lineage>
</organism>
<keyword id="KW-0997">Cell inner membrane</keyword>
<keyword id="KW-1003">Cell membrane</keyword>
<keyword id="KW-0472">Membrane</keyword>
<keyword id="KW-0653">Protein transport</keyword>
<keyword id="KW-1185">Reference proteome</keyword>
<keyword id="KW-0811">Translocation</keyword>
<keyword id="KW-0812">Transmembrane</keyword>
<keyword id="KW-1133">Transmembrane helix</keyword>
<keyword id="KW-0813">Transport</keyword>
<gene>
    <name evidence="1" type="primary">tatB</name>
    <name type="ordered locus">H16_A3404</name>
</gene>